<comment type="function">
    <molecule>Replicase large subunit</molecule>
    <text>Is an RNA-dependent RNA polymerase active in viral RNA replication.</text>
</comment>
<comment type="function">
    <molecule>Replicase small subunit</molecule>
    <text evidence="1 8">Is a methyltransferase active in RNA capping and an RNA helicase. Methyltransferase displays a cytoplasmic capping enzyme activity. This function is necessary since all viral RNAs are synthesized in the cytoplasm, and host capping enzymes are restricted to the nucleus. Helicase region probably exhibits NTPase and RNA unwinding activities (Potential). It also acts as a suppressor of RNA-mediated gene silencing, also known as post-transcriptional gene silencing (PTGS), a mechanism of plant viral defense that limits the accumulation of viral RNAs. May mediate silencing suppression through either inhibition of HEN1-mediated siRNA or siRNA demethylation (By similarity).</text>
</comment>
<comment type="catalytic activity">
    <reaction evidence="3">
        <text>RNA(n) + a ribonucleoside 5'-triphosphate = RNA(n+1) + diphosphate</text>
        <dbReference type="Rhea" id="RHEA:21248"/>
        <dbReference type="Rhea" id="RHEA-COMP:14527"/>
        <dbReference type="Rhea" id="RHEA-COMP:17342"/>
        <dbReference type="ChEBI" id="CHEBI:33019"/>
        <dbReference type="ChEBI" id="CHEBI:61557"/>
        <dbReference type="ChEBI" id="CHEBI:140395"/>
        <dbReference type="EC" id="2.7.7.48"/>
    </reaction>
</comment>
<comment type="catalytic activity">
    <reaction>
        <text>ATP + H2O = ADP + phosphate + H(+)</text>
        <dbReference type="Rhea" id="RHEA:13065"/>
        <dbReference type="ChEBI" id="CHEBI:15377"/>
        <dbReference type="ChEBI" id="CHEBI:15378"/>
        <dbReference type="ChEBI" id="CHEBI:30616"/>
        <dbReference type="ChEBI" id="CHEBI:43474"/>
        <dbReference type="ChEBI" id="CHEBI:456216"/>
        <dbReference type="EC" id="3.6.4.13"/>
    </reaction>
</comment>
<comment type="activity regulation">
    <text evidence="6">In resistant plants, is bound by host protein Tm-1 (e.g. tomato Tm-1 AC A7M6E7), thereby inhibiting replication complex activity.</text>
</comment>
<comment type="subunit">
    <text evidence="1 6">Heterodimer of a large and a small subunit (By similarity). Both large and small subunits interact, via an ATP bridge, with host protein Tm-1 (e.g. tomato Tm-1 AC A7M6E7 and AC A7M6E8) (PubMed:19423673).</text>
</comment>
<comment type="miscellaneous">
    <text>This protein is translated as a fusion protein by episodic readthrough of a termination codon. When readthrough of the terminator codon TGA occurs between the codons for Gln-1117 and Gln-1119, this results in the addition of the RdRp region to the replicase.</text>
</comment>
<comment type="similarity">
    <text evidence="8">Belongs to the ssRNA positive-strand viruses RNA-directed RNA polymerase family.</text>
</comment>
<protein>
    <recommendedName>
        <fullName>Replicase large subunit</fullName>
        <ecNumber>2.1.1.-</ecNumber>
        <ecNumber>2.7.7.-</ecNumber>
        <ecNumber>2.7.7.48</ecNumber>
        <ecNumber>3.6.4.13</ecNumber>
    </recommendedName>
    <alternativeName>
        <fullName>183 kDa protein</fullName>
    </alternativeName>
    <alternativeName>
        <fullName>RNA-directed RNA polymerase</fullName>
    </alternativeName>
    <component>
        <recommendedName>
            <fullName>Replicase small subunit</fullName>
            <ecNumber>2.1.1.-</ecNumber>
            <ecNumber>2.7.7.-</ecNumber>
            <ecNumber>3.6.4.13</ecNumber>
        </recommendedName>
        <alternativeName>
            <fullName>126 kDa protein</fullName>
        </alternativeName>
        <alternativeName>
            <fullName>Methyltransferase/RNA helicase</fullName>
            <shortName>MT/HEL</shortName>
        </alternativeName>
    </component>
</protein>
<evidence type="ECO:0000250" key="1"/>
<evidence type="ECO:0000250" key="2">
    <source>
        <dbReference type="UniProtKB" id="P03587"/>
    </source>
</evidence>
<evidence type="ECO:0000255" key="3">
    <source>
        <dbReference type="PROSITE-ProRule" id="PRU00539"/>
    </source>
</evidence>
<evidence type="ECO:0000255" key="4">
    <source>
        <dbReference type="PROSITE-ProRule" id="PRU00990"/>
    </source>
</evidence>
<evidence type="ECO:0000255" key="5">
    <source>
        <dbReference type="PROSITE-ProRule" id="PRU01079"/>
    </source>
</evidence>
<evidence type="ECO:0000269" key="6">
    <source>
    </source>
</evidence>
<evidence type="ECO:0000269" key="7">
    <source>
    </source>
</evidence>
<evidence type="ECO:0000305" key="8"/>
<keyword id="KW-0067">ATP-binding</keyword>
<keyword id="KW-0347">Helicase</keyword>
<keyword id="KW-0945">Host-virus interaction</keyword>
<keyword id="KW-0378">Hydrolase</keyword>
<keyword id="KW-1090">Inhibition of host innate immune response by virus</keyword>
<keyword id="KW-0547">Nucleotide-binding</keyword>
<keyword id="KW-0548">Nucleotidyltransferase</keyword>
<keyword id="KW-1159">RNA suppression of termination</keyword>
<keyword id="KW-0696">RNA-directed RNA polymerase</keyword>
<keyword id="KW-0941">Suppressor of RNA silencing</keyword>
<keyword id="KW-0808">Transferase</keyword>
<keyword id="KW-0899">Viral immunoevasion</keyword>
<keyword id="KW-0693">Viral RNA replication</keyword>
<feature type="chain" id="PRO_0000041180" description="Replicase large subunit">
    <location>
        <begin position="1"/>
        <end position="1612"/>
    </location>
</feature>
<feature type="chain" id="PRO_0000041181" description="Replicase small subunit">
    <location>
        <begin position="1"/>
        <end position="1117"/>
    </location>
</feature>
<feature type="domain" description="Alphavirus-like MT" evidence="5">
    <location>
        <begin position="72"/>
        <end position="280"/>
    </location>
</feature>
<feature type="domain" description="(+)RNA virus helicase ATP-binding" evidence="4">
    <location>
        <begin position="803"/>
        <end position="964"/>
    </location>
</feature>
<feature type="domain" description="(+)RNA virus helicase C-terminal" evidence="4">
    <location>
        <begin position="965"/>
        <end position="1117"/>
    </location>
</feature>
<feature type="domain" description="RdRp catalytic" evidence="3">
    <location>
        <begin position="1380"/>
        <end position="1493"/>
    </location>
</feature>
<feature type="region of interest" description="Methyltransferase">
    <location>
        <begin position="52"/>
        <end position="466"/>
    </location>
</feature>
<feature type="region of interest" description="Helicase">
    <location>
        <begin position="831"/>
        <end position="1086"/>
    </location>
</feature>
<feature type="binding site" evidence="2 4">
    <location>
        <begin position="838"/>
        <end position="843"/>
    </location>
    <ligand>
        <name>ATP</name>
        <dbReference type="ChEBI" id="CHEBI:30616"/>
    </ligand>
</feature>
<feature type="binding site" evidence="2">
    <location>
        <position position="870"/>
    </location>
    <ligand>
        <name>ATP</name>
        <dbReference type="ChEBI" id="CHEBI:30616"/>
    </ligand>
</feature>
<feature type="binding site" evidence="2">
    <location>
        <begin position="968"/>
        <end position="969"/>
    </location>
    <ligand>
        <name>ATP</name>
        <dbReference type="ChEBI" id="CHEBI:30616"/>
    </ligand>
</feature>
<feature type="binding site" evidence="2">
    <location>
        <position position="1077"/>
    </location>
    <ligand>
        <name>ATP</name>
        <dbReference type="ChEBI" id="CHEBI:30616"/>
    </ligand>
</feature>
<feature type="binding site" evidence="2">
    <location>
        <begin position="1098"/>
        <end position="1101"/>
    </location>
    <ligand>
        <name>ATP</name>
        <dbReference type="ChEBI" id="CHEBI:30616"/>
    </ligand>
</feature>
<feature type="mutagenesis site" description="Increased ability to multiply in tomato plants but reduced infectivity in original host plants (e.g. pepper and tobacco); when associated with Y-976 and N-1098." evidence="7">
    <original>V</original>
    <variation>R</variation>
    <location>
        <position position="299"/>
    </location>
</feature>
<feature type="mutagenesis site" description="Increased ability to multiply in tomato plants but reduced infectivity in original host plants (e.g. pepper and tobacco); when associated with R-299 and N-1098." evidence="7">
    <original>F</original>
    <variation>Y</variation>
    <location>
        <position position="976"/>
    </location>
</feature>
<feature type="mutagenesis site" description="Weaker inhibitory effect of the tomato tm-1 protein and enhanced viral replication efficiency in tomato plants. On the contrary, abolished replication in tobacco plants. Increased ability to multiply in tomato plants but reduced infectivity in original host plants (e.g. pepper and tobacco); when associated with R-299 and Y-976." evidence="7">
    <original>D</original>
    <variation>N</variation>
    <location>
        <position position="1098"/>
    </location>
</feature>
<organism>
    <name type="scientific">Pepper mild mottle virus (strain Japan)</name>
    <name type="common">PMMV-J</name>
    <dbReference type="NCBI Taxonomy" id="138663"/>
    <lineage>
        <taxon>Viruses</taxon>
        <taxon>Riboviria</taxon>
        <taxon>Orthornavirae</taxon>
        <taxon>Kitrinoviricota</taxon>
        <taxon>Alsuviricetes</taxon>
        <taxon>Martellivirales</taxon>
        <taxon>Virgaviridae</taxon>
        <taxon>Tobamovirus</taxon>
        <taxon>Pepper mild mottle virus</taxon>
    </lineage>
</organism>
<organismHost>
    <name type="scientific">Vicia faba</name>
    <name type="common">Broad bean</name>
    <name type="synonym">Faba vulgaris</name>
    <dbReference type="NCBI Taxonomy" id="3906"/>
</organismHost>
<reference key="1">
    <citation type="journal article" date="1997" name="Nihon Shokubutsu Byori Gakkaiho">
        <title>Nucleotide sequence of the Japanese isolate of pepper [Capsicum annuum] mild mottle tobamovirus (TMV-P) RNA.</title>
        <authorList>
            <person name="Kirita M."/>
            <person name="Akutsu K."/>
            <person name="Watanabe Y."/>
            <person name="Tsuda S."/>
        </authorList>
    </citation>
    <scope>NUCLEOTIDE SEQUENCE [MRNA]</scope>
</reference>
<reference key="2">
    <citation type="journal article" date="2009" name="Proc. Natl. Acad. Sci. U.S.A.">
        <title>An inhibitory interaction between viral and cellular proteins underlies the resistance of tomato to nonadapted tobamoviruses.</title>
        <authorList>
            <person name="Ishibashi K."/>
            <person name="Naito S."/>
            <person name="Meshi T."/>
            <person name="Ishikawa M."/>
        </authorList>
    </citation>
    <scope>INTERACTION WITH HOST PROTEIN TM-1</scope>
    <scope>ACTIVITY REGULATION</scope>
</reference>
<reference key="3">
    <citation type="journal article" date="2014" name="Mol. Plant Pathol.">
        <title>Functional characterization of the mutations in Pepper mild mottle virus overcoming tomato tm-1-mediated resistance.</title>
        <authorList>
            <person name="Mizumoto H."/>
            <person name="Morikawa Y."/>
            <person name="Ishibashi K."/>
            <person name="Kimura K."/>
            <person name="Matsumoto K."/>
            <person name="Tokunaga M."/>
            <person name="Kiba A."/>
            <person name="Ishikawa M."/>
            <person name="Okuno T."/>
            <person name="Hikichi Y."/>
        </authorList>
    </citation>
    <scope>MUTAGENESIS OF VAL-299; PHE-976 AND ASP-1098</scope>
</reference>
<name>RDRP_PMMVJ</name>
<sequence length="1612" mass="183305">MAYTQQATNAALASTLRGNNPLVNDLANRRLYESAVEQCNAHDRRPKVNFLRSISEEQTLIATKAYPEFQITFYNTQNAVHSLAGGLRSLELEYLMMQIPYGSTTYDIGGNFAAHMFKGRDYVHCCMPNMDLRDVMRHNAQKDSIELYLSKLAQKKKVIPPYQKPCFDKYTDDPQSVVCSKPFQHCEGVSHCTDKVYAVALHSLYDIPADEFGAALLRRNVHVCYAAFHFSENLLLEDSYVSLDDIGAFFSREGDMLNFSFVAESTLNYTHSYSNVLKYVCKTYFPASSREVYMKEFLVTRVNTWFCKFSRLDTFVLYRGVYHRGVDKEQFYSAMEDAWHYKKTLAMMNSERILLEDSSSVNYWFPKMKDMVIVPLFDVSLQNEGKRLARKEVMVSKDFVYTVLNHIRTYQSKALTYANVLSFVESIRSRVIINGVTARSEWDVDKALLQSLSMTFFLQTKLAMLKDDLVVQKFQVHSKSLTEYVWDEITAAFHNCFPTIKERLINKKLITVSEKALEIKVPDLYVTFHDRLVKEYKSSVEMPVLDVKKSLEEAEVMYNALSEISILKDSDKFDVDVFSRMCNTLGVDPLVAAKVMVAVVSNESGLTLTFERPTEANVALALQPTITSKEEGSLKIVSSDVGESSIKEVVRKSEISMLGLTGNTVSDEFQRSTEIESLQQFHMVSTETIIRKQMHAMVYTGPLKVQQCKNYLDSLVASLSAAVSNLKKIIKDTAAIDLETKEKFGVYDVCLKKWLVKPLSKGHAWGVVMDSDYKCFVALLTYDGENIVCGETWRRVAVSSESLVYSDMGKIRAIRSVLKDGEPHISSAKVTLVDGVPGCGKTKEILSRVNFDEDLVLVPGKQAAEMIRRRANSSGLIVATKENVRTVDSFLMNYGRGPCQYKRLFLDEGLMLHPGCVNFLVGMSLCSEAFVYGDTQQIPYINRVATFPYPKHLSQLEVDAVETRRTTLRCPADITFFLNQKYEGQVMCTSSVTRSVSHEVIQGAAVMNPVSKPLKGKVITFTQSDKSLLLSRGYEDVHTVHEVQGETFEDVSLVRLTPTPVGIISKQSPHLLVSLSRHTRSIKYYTVVLDAVVSVLRDLECVSSYLLDMYKVDVSTQYQLQIESVYKGVNLFVAAPKTGDVSDMQYYYDKCLPGNSTILNEYDAVTMQIRENSLNVKDCVLDMSKSVPLPRESETTLKPVIRTAAEKPRKPGLLENLVAMIKRNFNSPELVGVVDIEDTASLVVDKFFDAYLIKEKKKPKNIPLLSRASLERWIEKQEKSTIGQLADFDFIDLPAVDQYRHMIKQQPKQRLDLSIQTEYPALQTIVYHSKKINALFGPVFSELTRQLLETIDSSRFMFYTRKTPTQIEEFFSDLDSNVPMDILELDISKYDKSQNEFHCAVEYEIWKRLGLDDFLAEVWKHGHRKTTLKDYTAGIKTCLWYQRKSGDVTTFIGNTIIIAACLSSMLPMERLIKGAFCGDDSILYFPKGTDFPDIQQGANLLWNFEAKLFRKRYGYFCGRYIIHHDRGCIVYYDPLKLISKLGAKHIKNREHLEEFRTSLCDVAGSLNNCAYYTHLDDAVGEVIKTAPPGSFVYRALVKYLCDKRLFQTLFLE</sequence>
<proteinExistence type="evidence at protein level"/>
<accession>P89657</accession>
<accession>P90347</accession>
<dbReference type="EC" id="2.1.1.-"/>
<dbReference type="EC" id="2.7.7.-"/>
<dbReference type="EC" id="2.7.7.48"/>
<dbReference type="EC" id="3.6.4.13"/>
<dbReference type="EMBL" id="AB000709">
    <property type="protein sequence ID" value="BAA19167.1"/>
    <property type="molecule type" value="mRNA"/>
</dbReference>
<dbReference type="EMBL" id="AB000709">
    <property type="protein sequence ID" value="BAA19166.1"/>
    <property type="molecule type" value="mRNA"/>
</dbReference>
<dbReference type="RefSeq" id="NP_619741.1">
    <property type="nucleotide sequence ID" value="NC_003630.1"/>
</dbReference>
<dbReference type="SMR" id="P89657"/>
<dbReference type="GeneID" id="1724829"/>
<dbReference type="KEGG" id="vg:1724829"/>
<dbReference type="Proteomes" id="UP000000475">
    <property type="component" value="Genome"/>
</dbReference>
<dbReference type="GO" id="GO:0005524">
    <property type="term" value="F:ATP binding"/>
    <property type="evidence" value="ECO:0007669"/>
    <property type="project" value="UniProtKB-KW"/>
</dbReference>
<dbReference type="GO" id="GO:0016887">
    <property type="term" value="F:ATP hydrolysis activity"/>
    <property type="evidence" value="ECO:0007669"/>
    <property type="project" value="RHEA"/>
</dbReference>
<dbReference type="GO" id="GO:0008174">
    <property type="term" value="F:mRNA methyltransferase activity"/>
    <property type="evidence" value="ECO:0007669"/>
    <property type="project" value="InterPro"/>
</dbReference>
<dbReference type="GO" id="GO:0003723">
    <property type="term" value="F:RNA binding"/>
    <property type="evidence" value="ECO:0007669"/>
    <property type="project" value="InterPro"/>
</dbReference>
<dbReference type="GO" id="GO:0003724">
    <property type="term" value="F:RNA helicase activity"/>
    <property type="evidence" value="ECO:0007669"/>
    <property type="project" value="UniProtKB-EC"/>
</dbReference>
<dbReference type="GO" id="GO:0003968">
    <property type="term" value="F:RNA-directed RNA polymerase activity"/>
    <property type="evidence" value="ECO:0007669"/>
    <property type="project" value="UniProtKB-KW"/>
</dbReference>
<dbReference type="GO" id="GO:0006351">
    <property type="term" value="P:DNA-templated transcription"/>
    <property type="evidence" value="ECO:0007669"/>
    <property type="project" value="InterPro"/>
</dbReference>
<dbReference type="GO" id="GO:0016556">
    <property type="term" value="P:mRNA modification"/>
    <property type="evidence" value="ECO:0007669"/>
    <property type="project" value="InterPro"/>
</dbReference>
<dbReference type="GO" id="GO:0006396">
    <property type="term" value="P:RNA processing"/>
    <property type="evidence" value="ECO:0007669"/>
    <property type="project" value="InterPro"/>
</dbReference>
<dbReference type="GO" id="GO:0052170">
    <property type="term" value="P:symbiont-mediated suppression of host innate immune response"/>
    <property type="evidence" value="ECO:0007669"/>
    <property type="project" value="UniProtKB-KW"/>
</dbReference>
<dbReference type="GO" id="GO:0039694">
    <property type="term" value="P:viral RNA genome replication"/>
    <property type="evidence" value="ECO:0007669"/>
    <property type="project" value="InterPro"/>
</dbReference>
<dbReference type="CDD" id="cd23251">
    <property type="entry name" value="Virgaviridae_RdRp"/>
    <property type="match status" value="1"/>
</dbReference>
<dbReference type="Gene3D" id="3.30.450.420">
    <property type="match status" value="1"/>
</dbReference>
<dbReference type="Gene3D" id="3.40.50.300">
    <property type="entry name" value="P-loop containing nucleotide triphosphate hydrolases"/>
    <property type="match status" value="2"/>
</dbReference>
<dbReference type="InterPro" id="IPR027351">
    <property type="entry name" value="(+)RNA_virus_helicase_core_dom"/>
</dbReference>
<dbReference type="InterPro" id="IPR002588">
    <property type="entry name" value="Alphavirus-like_MT_dom"/>
</dbReference>
<dbReference type="InterPro" id="IPR043502">
    <property type="entry name" value="DNA/RNA_pol_sf"/>
</dbReference>
<dbReference type="InterPro" id="IPR027417">
    <property type="entry name" value="P-loop_NTPase"/>
</dbReference>
<dbReference type="InterPro" id="IPR001788">
    <property type="entry name" value="RNA-dep_RNA_pol_alsuvir"/>
</dbReference>
<dbReference type="InterPro" id="IPR007094">
    <property type="entry name" value="RNA-dir_pol_PSvirus"/>
</dbReference>
<dbReference type="InterPro" id="IPR049329">
    <property type="entry name" value="ToMV_Hel_N"/>
</dbReference>
<dbReference type="InterPro" id="IPR047310">
    <property type="entry name" value="Virgaviridae_RdRp"/>
</dbReference>
<dbReference type="Pfam" id="PF00978">
    <property type="entry name" value="RdRP_2"/>
    <property type="match status" value="1"/>
</dbReference>
<dbReference type="Pfam" id="PF20896">
    <property type="entry name" value="ToMV_Hel_N"/>
    <property type="match status" value="1"/>
</dbReference>
<dbReference type="Pfam" id="PF01443">
    <property type="entry name" value="Viral_helicase1"/>
    <property type="match status" value="1"/>
</dbReference>
<dbReference type="Pfam" id="PF01660">
    <property type="entry name" value="Vmethyltransf"/>
    <property type="match status" value="1"/>
</dbReference>
<dbReference type="SUPFAM" id="SSF56672">
    <property type="entry name" value="DNA/RNA polymerases"/>
    <property type="match status" value="1"/>
</dbReference>
<dbReference type="SUPFAM" id="SSF52540">
    <property type="entry name" value="P-loop containing nucleoside triphosphate hydrolases"/>
    <property type="match status" value="1"/>
</dbReference>
<dbReference type="PROSITE" id="PS51743">
    <property type="entry name" value="ALPHAVIRUS_MT"/>
    <property type="match status" value="1"/>
</dbReference>
<dbReference type="PROSITE" id="PS51657">
    <property type="entry name" value="PSRV_HELICASE"/>
    <property type="match status" value="1"/>
</dbReference>
<dbReference type="PROSITE" id="PS50507">
    <property type="entry name" value="RDRP_SSRNA_POS"/>
    <property type="match status" value="1"/>
</dbReference>